<dbReference type="EC" id="2.5.1.93"/>
<dbReference type="EMBL" id="AB055078">
    <property type="protein sequence ID" value="BAB84122.1"/>
    <property type="molecule type" value="mRNA"/>
</dbReference>
<dbReference type="SMR" id="Q8W405"/>
<dbReference type="KEGG" id="ag:BAB84122"/>
<dbReference type="BRENDA" id="2.5.1.93">
    <property type="organism ID" value="3048"/>
</dbReference>
<dbReference type="SABIO-RK" id="Q8W405"/>
<dbReference type="GO" id="GO:0005789">
    <property type="term" value="C:endoplasmic reticulum membrane"/>
    <property type="evidence" value="ECO:0007669"/>
    <property type="project" value="UniProtKB-SubCell"/>
</dbReference>
<dbReference type="GO" id="GO:0005743">
    <property type="term" value="C:mitochondrial inner membrane"/>
    <property type="evidence" value="ECO:0007669"/>
    <property type="project" value="UniProtKB-UniRule"/>
</dbReference>
<dbReference type="GO" id="GO:0004337">
    <property type="term" value="F:(2E,6E)-farnesyl diphosphate synthase activity"/>
    <property type="evidence" value="ECO:0000315"/>
    <property type="project" value="CACAO"/>
</dbReference>
<dbReference type="GO" id="GO:0102930">
    <property type="term" value="F:4-hydroxybenzoate geranyltransferase activity"/>
    <property type="evidence" value="ECO:0007669"/>
    <property type="project" value="UniProtKB-EC"/>
</dbReference>
<dbReference type="GO" id="GO:0008299">
    <property type="term" value="P:isoprenoid biosynthetic process"/>
    <property type="evidence" value="ECO:0007669"/>
    <property type="project" value="UniProtKB-UniRule"/>
</dbReference>
<dbReference type="GO" id="GO:0006744">
    <property type="term" value="P:ubiquinone biosynthetic process"/>
    <property type="evidence" value="ECO:0007669"/>
    <property type="project" value="UniProtKB-UniRule"/>
</dbReference>
<dbReference type="CDD" id="cd13959">
    <property type="entry name" value="PT_UbiA_COQ2"/>
    <property type="match status" value="1"/>
</dbReference>
<dbReference type="FunFam" id="1.20.120.1780:FF:000001">
    <property type="entry name" value="4-hydroxybenzoate octaprenyltransferase"/>
    <property type="match status" value="1"/>
</dbReference>
<dbReference type="FunFam" id="1.10.357.140:FF:000003">
    <property type="entry name" value="4-hydroxybenzoate polyprenyltransferase, mitochondrial"/>
    <property type="match status" value="1"/>
</dbReference>
<dbReference type="Gene3D" id="1.10.357.140">
    <property type="entry name" value="UbiA prenyltransferase"/>
    <property type="match status" value="1"/>
</dbReference>
<dbReference type="Gene3D" id="1.20.120.1780">
    <property type="entry name" value="UbiA prenyltransferase"/>
    <property type="match status" value="1"/>
</dbReference>
<dbReference type="HAMAP" id="MF_01635">
    <property type="entry name" value="UbiA"/>
    <property type="match status" value="1"/>
</dbReference>
<dbReference type="InterPro" id="IPR006370">
    <property type="entry name" value="HB_polyprenyltransferase-like"/>
</dbReference>
<dbReference type="InterPro" id="IPR039653">
    <property type="entry name" value="Prenyltransferase"/>
</dbReference>
<dbReference type="InterPro" id="IPR000537">
    <property type="entry name" value="UbiA_prenyltransferase"/>
</dbReference>
<dbReference type="InterPro" id="IPR030470">
    <property type="entry name" value="UbiA_prenylTrfase_CS"/>
</dbReference>
<dbReference type="InterPro" id="IPR044878">
    <property type="entry name" value="UbiA_sf"/>
</dbReference>
<dbReference type="NCBIfam" id="TIGR01474">
    <property type="entry name" value="ubiA_proteo"/>
    <property type="match status" value="1"/>
</dbReference>
<dbReference type="PANTHER" id="PTHR11048:SF28">
    <property type="entry name" value="4-HYDROXYBENZOATE POLYPRENYLTRANSFERASE, MITOCHONDRIAL"/>
    <property type="match status" value="1"/>
</dbReference>
<dbReference type="PANTHER" id="PTHR11048">
    <property type="entry name" value="PRENYLTRANSFERASES"/>
    <property type="match status" value="1"/>
</dbReference>
<dbReference type="Pfam" id="PF01040">
    <property type="entry name" value="UbiA"/>
    <property type="match status" value="1"/>
</dbReference>
<dbReference type="PROSITE" id="PS00943">
    <property type="entry name" value="UBIA"/>
    <property type="match status" value="1"/>
</dbReference>
<evidence type="ECO:0000255" key="1"/>
<evidence type="ECO:0000269" key="2">
    <source>
    </source>
</evidence>
<evidence type="ECO:0000269" key="3">
    <source>
    </source>
</evidence>
<evidence type="ECO:0000269" key="4">
    <source>
    </source>
</evidence>
<evidence type="ECO:0000305" key="5"/>
<sequence>MVSSKQTQLKKGKQPSWIEMYLPKEVRPYAHLARLDKPIGSWLLAWPAFWSVALAADLESLPKMLAIFGWWAVWIRGAGCTINDYFDRNFDKKVERTKSRPLASGAVSPAQGLWWLAFQLFIGLGVLYQFNVLTLALAIVHVPFVFAYPLMKRITYWPQAFLGVMISWGALLGSSALKGSVVPSIAYPLYISSFFWTLVYDTIYAHQDKVDDAKAGIKSTALRFGDATKMWISWFGVGCIAALVIGGLILNIGLPYYVFVAIATGQLVWQIFTVDLLSPLDCGKKFVSNQWFGAIIFTGILLGRLFP</sequence>
<organism>
    <name type="scientific">Lithospermum erythrorhizon</name>
    <name type="common">Purple gromwell</name>
    <name type="synonym">Lithospermum officinale var. erythrorhizon</name>
    <dbReference type="NCBI Taxonomy" id="34254"/>
    <lineage>
        <taxon>Eukaryota</taxon>
        <taxon>Viridiplantae</taxon>
        <taxon>Streptophyta</taxon>
        <taxon>Embryophyta</taxon>
        <taxon>Tracheophyta</taxon>
        <taxon>Spermatophyta</taxon>
        <taxon>Magnoliopsida</taxon>
        <taxon>eudicotyledons</taxon>
        <taxon>Gunneridae</taxon>
        <taxon>Pentapetalae</taxon>
        <taxon>asterids</taxon>
        <taxon>lamiids</taxon>
        <taxon>Boraginales</taxon>
        <taxon>Boraginaceae</taxon>
        <taxon>Boraginoideae</taxon>
        <taxon>Lithospermeae</taxon>
        <taxon>Lithospermum</taxon>
    </lineage>
</organism>
<reference key="1">
    <citation type="journal article" date="2002" name="J. Biol. Chem.">
        <title>Geranyl diphosphate:4-hydroxybenzoate geranyltransferase from Lithospermum erythrorhizon. Cloning and characterization of a key enzyme in shikonin biosynthesis.</title>
        <authorList>
            <person name="Yazaki K."/>
            <person name="Kunihisa M."/>
            <person name="Fujisaki T."/>
            <person name="Sato F."/>
        </authorList>
    </citation>
    <scope>NUCLEOTIDE SEQUENCE [MRNA]</scope>
    <scope>FUNCTION</scope>
    <scope>CATALYTIC ACTIVITY</scope>
    <scope>BIOPHYSICOCHEMICAL PROPERTIES</scope>
    <scope>INDUCTION</scope>
    <scope>TISSUE SPECIFICITY</scope>
</reference>
<reference key="2">
    <citation type="journal article" date="1993" name="Phytochemistry">
        <title>Intracellular localization of p-hydroxybenzoate geranyltransferase, a key enzyme involved in shikonin biosynthesis.</title>
        <authorList>
            <person name="Yamaga Y."/>
            <person name="Nakanishi K."/>
            <person name="Fukui H."/>
            <person name="Tabata M."/>
        </authorList>
    </citation>
    <scope>SUBCELLULAR LOCATION</scope>
</reference>
<reference key="3">
    <citation type="journal article" date="1998" name="Planta">
        <title>4-Hydroxybenzoate 3-geranyltransferase from Lithospermum erythrorhizon: purification of a plant membrane-bound prenyltransferase.</title>
        <authorList>
            <person name="Muehlenweg A."/>
            <person name="Melzer M."/>
            <person name="Li S.M."/>
            <person name="Heide L."/>
        </authorList>
    </citation>
    <scope>INDUCTION BY METHYL JASMONATE</scope>
    <scope>CATALYTIC ACTIVITY</scope>
    <scope>COFACTOR</scope>
</reference>
<reference key="4">
    <citation type="journal article" date="2009" name="Biochem. J.">
        <title>Functional characterization of LePGT1, a membrane-bound prenyltransferase involved in the geranylation of p-hydroxybenzoic acid.</title>
        <authorList>
            <person name="Ohara K."/>
            <person name="Muroya A."/>
            <person name="Fukushima N."/>
            <person name="Yazaki K."/>
        </authorList>
    </citation>
    <scope>FUNCTION</scope>
    <scope>MUTAGENESIS OF ARG-76; ASN-83; ASP-84; ASP-87; ASP-91; ARG-96; LYS-152; ARG-153; GLN-207; ASP-208; ASP-211; ASP-212; SER-219 AND LYS-229</scope>
    <scope>3D-STRUCTURE MODELING</scope>
</reference>
<gene>
    <name type="primary">PGT-1</name>
</gene>
<protein>
    <recommendedName>
        <fullName>4-hydroxybenzoate geranyltransferase 1</fullName>
        <ecNumber>2.5.1.93</ecNumber>
    </recommendedName>
    <alternativeName>
        <fullName>PHB geranyltransferase 1</fullName>
        <shortName>LePGT1</shortName>
    </alternativeName>
</protein>
<feature type="chain" id="PRO_0000409380" description="4-hydroxybenzoate geranyltransferase 1">
    <location>
        <begin position="1"/>
        <end position="307"/>
    </location>
</feature>
<feature type="transmembrane region" description="Helical" evidence="1">
    <location>
        <begin position="38"/>
        <end position="58"/>
    </location>
</feature>
<feature type="transmembrane region" description="Helical" evidence="1">
    <location>
        <begin position="62"/>
        <end position="82"/>
    </location>
</feature>
<feature type="transmembrane region" description="Helical" evidence="1">
    <location>
        <begin position="120"/>
        <end position="140"/>
    </location>
</feature>
<feature type="transmembrane region" description="Helical" evidence="1">
    <location>
        <begin position="154"/>
        <end position="174"/>
    </location>
</feature>
<feature type="transmembrane region" description="Helical" evidence="1">
    <location>
        <begin position="179"/>
        <end position="199"/>
    </location>
</feature>
<feature type="transmembrane region" description="Helical" evidence="1">
    <location>
        <begin position="230"/>
        <end position="250"/>
    </location>
</feature>
<feature type="transmembrane region" description="Helical" evidence="1">
    <location>
        <begin position="252"/>
        <end position="272"/>
    </location>
</feature>
<feature type="transmembrane region" description="Helical" evidence="1">
    <location>
        <begin position="286"/>
        <end position="306"/>
    </location>
</feature>
<feature type="mutagenesis site" description="Reduces activity 99%, decreases affinity for 4-hydroxybenzoate 4-fold and increases affinity for geranyl diphosphate 4-fold." evidence="3">
    <original>R</original>
    <variation>A</variation>
    <location>
        <position position="76"/>
    </location>
</feature>
<feature type="mutagenesis site" description="Reduces activity 99% and decreases affinity for 4-hydroxybenzoate 21.5-fold." evidence="3">
    <original>N</original>
    <variation>A</variation>
    <location>
        <position position="83"/>
    </location>
</feature>
<feature type="mutagenesis site" description="Reduces activity 93% and no effect on affinity for 4-hydroxybenzoate." evidence="3">
    <original>N</original>
    <variation>D</variation>
    <location>
        <position position="83"/>
    </location>
</feature>
<feature type="mutagenesis site" description="Reduces activity 98%." evidence="3">
    <original>D</original>
    <variation>A</variation>
    <location>
        <position position="84"/>
    </location>
</feature>
<feature type="mutagenesis site" description="Reduces activity 85% and decreases affinity for 4-hydroxybenzoate 3.5-fold and for geranyl diphosphate 6.5-fold." evidence="3">
    <original>D</original>
    <variation>E</variation>
    <location>
        <position position="84"/>
    </location>
</feature>
<feature type="mutagenesis site" description="Loss of activity." evidence="3">
    <original>D</original>
    <variation>Q</variation>
    <location>
        <position position="84"/>
    </location>
</feature>
<feature type="mutagenesis site" description="Loss of activity." evidence="3">
    <original>D</original>
    <variation>A</variation>
    <variation>E</variation>
    <location>
        <position position="87"/>
    </location>
</feature>
<feature type="mutagenesis site" description="Loss of activity." evidence="3">
    <original>D</original>
    <variation>A</variation>
    <location>
        <position position="91"/>
    </location>
</feature>
<feature type="mutagenesis site" description="Reduces activity 99%." evidence="3">
    <original>R</original>
    <variation>A</variation>
    <variation>K</variation>
    <location>
        <position position="96"/>
    </location>
</feature>
<feature type="mutagenesis site" description="Reduces activity 99%." evidence="3">
    <original>K</original>
    <variation>A</variation>
    <location>
        <position position="152"/>
    </location>
</feature>
<feature type="mutagenesis site" description="Reduces activity 18%." evidence="3">
    <original>R</original>
    <variation>A</variation>
    <location>
        <position position="153"/>
    </location>
</feature>
<feature type="mutagenesis site" description="Reduces activity 97%." evidence="3">
    <original>Q</original>
    <variation>A</variation>
    <location>
        <position position="207"/>
    </location>
</feature>
<feature type="mutagenesis site" description="Loss of activity." evidence="3">
    <original>D</original>
    <variation>A</variation>
    <variation>N</variation>
    <location>
        <position position="208"/>
    </location>
</feature>
<feature type="mutagenesis site" description="Reduces activity 99%." evidence="3">
    <original>D</original>
    <variation>E</variation>
    <location>
        <position position="208"/>
    </location>
</feature>
<feature type="mutagenesis site" description="Reduces activity 98%." evidence="3">
    <original>D</original>
    <variation>A</variation>
    <location>
        <position position="211"/>
    </location>
</feature>
<feature type="mutagenesis site" description="Reduces activity 99%." evidence="3">
    <original>D</original>
    <variation>A</variation>
    <location>
        <position position="212"/>
    </location>
</feature>
<feature type="mutagenesis site" description="Reduces activity 97%." evidence="3">
    <original>D</original>
    <variation>E</variation>
    <location>
        <position position="212"/>
    </location>
</feature>
<feature type="mutagenesis site" description="Reduces activity 85% and decreases affinity for geranyl diphosphate 5-fold." evidence="3">
    <original>S</original>
    <variation>A</variation>
    <location>
        <position position="219"/>
    </location>
</feature>
<feature type="mutagenesis site" description="Reduces activity 87% and decreases affinity for geranyl diphosphate 3-fold." evidence="3">
    <original>K</original>
    <variation>A</variation>
    <location>
        <position position="229"/>
    </location>
</feature>
<name>PGT1_LITER</name>
<keyword id="KW-0256">Endoplasmic reticulum</keyword>
<keyword id="KW-0460">Magnesium</keyword>
<keyword id="KW-0472">Membrane</keyword>
<keyword id="KW-0808">Transferase</keyword>
<keyword id="KW-0812">Transmembrane</keyword>
<keyword id="KW-1133">Transmembrane helix</keyword>
<proteinExistence type="evidence at protein level"/>
<comment type="function">
    <text evidence="2 3">Prenyltransferase involved in the biosynthesis of shikonin, a naphthoquinone secondary metabolite. Could accept only geranyl diphosphate and not dimethylallyl diphosphate, farnesyl diphosphate, or geranylgeranyl diphosphate as substrate.</text>
</comment>
<comment type="catalytic activity">
    <reaction evidence="2 4">
        <text>4-hydroxybenzoate + (2E)-geranyl diphosphate = 3-geranyl-4-hydroxybenzoate + diphosphate</text>
        <dbReference type="Rhea" id="RHEA:27854"/>
        <dbReference type="ChEBI" id="CHEBI:17879"/>
        <dbReference type="ChEBI" id="CHEBI:33019"/>
        <dbReference type="ChEBI" id="CHEBI:58057"/>
        <dbReference type="ChEBI" id="CHEBI:60878"/>
        <dbReference type="EC" id="2.5.1.93"/>
    </reaction>
</comment>
<comment type="cofactor">
    <cofactor evidence="4">
        <name>Mg(2+)</name>
        <dbReference type="ChEBI" id="CHEBI:18420"/>
    </cofactor>
</comment>
<comment type="biophysicochemical properties">
    <kinetics>
        <KM evidence="2">10.3 uM for 4-hydroxybenzoate</KM>
        <KM evidence="2">5.1 uM for geranyl diphosphate</KM>
    </kinetics>
</comment>
<comment type="subcellular location">
    <subcellularLocation>
        <location evidence="5">Endoplasmic reticulum membrane</location>
        <topology evidence="5">Multi-pass membrane protein</topology>
    </subcellularLocation>
</comment>
<comment type="tissue specificity">
    <text evidence="2">Expressed only in roots.</text>
</comment>
<comment type="induction">
    <text evidence="2 4">Up-regulated in the dark and by methyl jasmonate or oligogalacturonide. Down-regulated in the light and by ammonium or 2,4-dichlorophenoxyacetic acid (2,4-D).</text>
</comment>
<comment type="domain">
    <text>The N-terminus (1-130) is determinant for the chain length specificity. Region I (76-96) and region III (201-229) are involved in the recognition of both substrates in a coordinated manner.</text>
</comment>
<comment type="similarity">
    <text evidence="5">Belongs to the UbiA prenyltransferase family.</text>
</comment>
<accession>Q8W405</accession>